<accession>Q2R9D2</accession>
<accession>A0A0P0XZV8</accession>
<accession>Q53LR2</accession>
<reference key="1">
    <citation type="journal article" date="2005" name="BMC Biol.">
        <title>The sequence of rice chromosomes 11 and 12, rich in disease resistance genes and recent gene duplications.</title>
        <authorList>
            <consortium name="The rice chromosomes 11 and 12 sequencing consortia"/>
        </authorList>
    </citation>
    <scope>NUCLEOTIDE SEQUENCE [LARGE SCALE GENOMIC DNA]</scope>
    <source>
        <strain>cv. Nipponbare</strain>
    </source>
</reference>
<reference key="2">
    <citation type="journal article" date="2005" name="Nature">
        <title>The map-based sequence of the rice genome.</title>
        <authorList>
            <consortium name="International rice genome sequencing project (IRGSP)"/>
        </authorList>
    </citation>
    <scope>NUCLEOTIDE SEQUENCE [LARGE SCALE GENOMIC DNA]</scope>
    <source>
        <strain>cv. Nipponbare</strain>
    </source>
</reference>
<reference key="3">
    <citation type="journal article" date="2008" name="Nucleic Acids Res.">
        <title>The rice annotation project database (RAP-DB): 2008 update.</title>
        <authorList>
            <consortium name="The rice annotation project (RAP)"/>
        </authorList>
    </citation>
    <scope>GENOME REANNOTATION</scope>
    <source>
        <strain>cv. Nipponbare</strain>
    </source>
</reference>
<reference key="4">
    <citation type="journal article" date="2013" name="Rice">
        <title>Improvement of the Oryza sativa Nipponbare reference genome using next generation sequence and optical map data.</title>
        <authorList>
            <person name="Kawahara Y."/>
            <person name="de la Bastide M."/>
            <person name="Hamilton J.P."/>
            <person name="Kanamori H."/>
            <person name="McCombie W.R."/>
            <person name="Ouyang S."/>
            <person name="Schwartz D.C."/>
            <person name="Tanaka T."/>
            <person name="Wu J."/>
            <person name="Zhou S."/>
            <person name="Childs K.L."/>
            <person name="Davidson R.M."/>
            <person name="Lin H."/>
            <person name="Quesada-Ocampo L."/>
            <person name="Vaillancourt B."/>
            <person name="Sakai H."/>
            <person name="Lee S.S."/>
            <person name="Kim J."/>
            <person name="Numa H."/>
            <person name="Itoh T."/>
            <person name="Buell C.R."/>
            <person name="Matsumoto T."/>
        </authorList>
    </citation>
    <scope>GENOME REANNOTATION</scope>
    <source>
        <strain>cv. Nipponbare</strain>
    </source>
</reference>
<reference key="5">
    <citation type="journal article" date="2003" name="Science">
        <title>Collection, mapping, and annotation of over 28,000 cDNA clones from japonica rice.</title>
        <authorList>
            <consortium name="The rice full-length cDNA consortium"/>
        </authorList>
    </citation>
    <scope>NUCLEOTIDE SEQUENCE [LARGE SCALE MRNA]</scope>
    <source>
        <strain>cv. Nipponbare</strain>
    </source>
</reference>
<organism>
    <name type="scientific">Oryza sativa subsp. japonica</name>
    <name type="common">Rice</name>
    <dbReference type="NCBI Taxonomy" id="39947"/>
    <lineage>
        <taxon>Eukaryota</taxon>
        <taxon>Viridiplantae</taxon>
        <taxon>Streptophyta</taxon>
        <taxon>Embryophyta</taxon>
        <taxon>Tracheophyta</taxon>
        <taxon>Spermatophyta</taxon>
        <taxon>Magnoliopsida</taxon>
        <taxon>Liliopsida</taxon>
        <taxon>Poales</taxon>
        <taxon>Poaceae</taxon>
        <taxon>BOP clade</taxon>
        <taxon>Oryzoideae</taxon>
        <taxon>Oryzeae</taxon>
        <taxon>Oryzinae</taxon>
        <taxon>Oryza</taxon>
        <taxon>Oryza sativa</taxon>
    </lineage>
</organism>
<keyword id="KW-0238">DNA-binding</keyword>
<keyword id="KW-0539">Nucleus</keyword>
<keyword id="KW-1185">Reference proteome</keyword>
<keyword id="KW-0677">Repeat</keyword>
<keyword id="KW-0804">Transcription</keyword>
<keyword id="KW-0805">Transcription regulation</keyword>
<gene>
    <name type="ordered locus">Os11g0197600</name>
    <name type="ordered locus">LOC_Os11g09160</name>
</gene>
<sequence>MVVREKQGGRMGKGKGKGKEKECDINCFGRSFFRVLLTLQSLERMKIPSSFNQCLQNQPTGMVSLVDRSGNKWSAELTSDSEGFFFVHGWKEFVRDNSIQCGQFLVFTYDKRSQFSVTVFEPSGIDKISTFSAHPSKNVIIKTESDEGGMVTAAITTEKMAPALKENNGITGKRTRDVDYLMEDRVVVFKKSSEANVCESSRRKRAGASAGKSKVTSTSHNSTRGSSCSSDEDNSSSKSPNPPFLMRFLSGEVSRRGRCVSKGQRQLTVISQRRPVTEAEKDHALQRAREFKSKNPFAVQIMMESYVYVGFFMNIPCEFVRECLPHTNKRITLWDPQGKAWEVNYVYYSDRSVGSFSGGWGKFAVGNNLEKFDVCVFELVQKDNIKVHIYRVVPEITPHKLRSDPK</sequence>
<comment type="subcellular location">
    <subcellularLocation>
        <location evidence="1">Nucleus</location>
    </subcellularLocation>
</comment>
<comment type="sequence caution" evidence="3">
    <conflict type="erroneous gene model prediction">
        <sequence resource="EMBL-CDS" id="AAX96729"/>
    </conflict>
</comment>
<evidence type="ECO:0000255" key="1">
    <source>
        <dbReference type="PROSITE-ProRule" id="PRU00326"/>
    </source>
</evidence>
<evidence type="ECO:0000256" key="2">
    <source>
        <dbReference type="SAM" id="MobiDB-lite"/>
    </source>
</evidence>
<evidence type="ECO:0000305" key="3"/>
<name>Y1176_ORYSJ</name>
<proteinExistence type="evidence at transcript level"/>
<dbReference type="EMBL" id="AC139170">
    <property type="protein sequence ID" value="AAX96729.1"/>
    <property type="status" value="ALT_SEQ"/>
    <property type="molecule type" value="Genomic_DNA"/>
</dbReference>
<dbReference type="EMBL" id="DP000010">
    <property type="protein sequence ID" value="ABA91888.2"/>
    <property type="molecule type" value="Genomic_DNA"/>
</dbReference>
<dbReference type="EMBL" id="AP008217">
    <property type="protein sequence ID" value="BAF27794.1"/>
    <property type="molecule type" value="Genomic_DNA"/>
</dbReference>
<dbReference type="EMBL" id="AP014967">
    <property type="protein sequence ID" value="BAT13054.1"/>
    <property type="molecule type" value="Genomic_DNA"/>
</dbReference>
<dbReference type="EMBL" id="AK067571">
    <property type="protein sequence ID" value="BAG90478.1"/>
    <property type="molecule type" value="mRNA"/>
</dbReference>
<dbReference type="EMBL" id="AK101941">
    <property type="protein sequence ID" value="BAG95305.1"/>
    <property type="molecule type" value="mRNA"/>
</dbReference>
<dbReference type="RefSeq" id="XP_015615373.1">
    <property type="nucleotide sequence ID" value="XM_015759887.1"/>
</dbReference>
<dbReference type="SMR" id="Q2R9D2"/>
<dbReference type="STRING" id="39947.Q2R9D2"/>
<dbReference type="PaxDb" id="39947-Q2R9D2"/>
<dbReference type="EnsemblPlants" id="Os11t0197600-01">
    <property type="protein sequence ID" value="Os11t0197600-01"/>
    <property type="gene ID" value="Os11g0197600"/>
</dbReference>
<dbReference type="Gramene" id="Os11t0197600-01">
    <property type="protein sequence ID" value="Os11t0197600-01"/>
    <property type="gene ID" value="Os11g0197600"/>
</dbReference>
<dbReference type="KEGG" id="dosa:Os11g0197600"/>
<dbReference type="eggNOG" id="ENOG502QSIS">
    <property type="taxonomic scope" value="Eukaryota"/>
</dbReference>
<dbReference type="HOGENOM" id="CLU_015069_1_1_1"/>
<dbReference type="InParanoid" id="Q2R9D2"/>
<dbReference type="OMA" id="WEVICIC"/>
<dbReference type="OrthoDB" id="1666376at2759"/>
<dbReference type="Proteomes" id="UP000000763">
    <property type="component" value="Chromosome 11"/>
</dbReference>
<dbReference type="Proteomes" id="UP000059680">
    <property type="component" value="Chromosome 11"/>
</dbReference>
<dbReference type="GO" id="GO:0005634">
    <property type="term" value="C:nucleus"/>
    <property type="evidence" value="ECO:0007669"/>
    <property type="project" value="UniProtKB-SubCell"/>
</dbReference>
<dbReference type="GO" id="GO:0003677">
    <property type="term" value="F:DNA binding"/>
    <property type="evidence" value="ECO:0007669"/>
    <property type="project" value="UniProtKB-KW"/>
</dbReference>
<dbReference type="CDD" id="cd10017">
    <property type="entry name" value="B3_DNA"/>
    <property type="match status" value="2"/>
</dbReference>
<dbReference type="Gene3D" id="2.40.330.10">
    <property type="entry name" value="DNA-binding pseudobarrel domain"/>
    <property type="match status" value="2"/>
</dbReference>
<dbReference type="InterPro" id="IPR003340">
    <property type="entry name" value="B3_DNA-bd"/>
</dbReference>
<dbReference type="InterPro" id="IPR015300">
    <property type="entry name" value="DNA-bd_pseudobarrel_sf"/>
</dbReference>
<dbReference type="InterPro" id="IPR044837">
    <property type="entry name" value="REM16-like"/>
</dbReference>
<dbReference type="PANTHER" id="PTHR31391:SF155">
    <property type="entry name" value="B3 DOMAIN-CONTAINING PROTEIN OS11G0197600"/>
    <property type="match status" value="1"/>
</dbReference>
<dbReference type="PANTHER" id="PTHR31391">
    <property type="entry name" value="B3 DOMAIN-CONTAINING PROTEIN OS11G0197600-RELATED"/>
    <property type="match status" value="1"/>
</dbReference>
<dbReference type="Pfam" id="PF02362">
    <property type="entry name" value="B3"/>
    <property type="match status" value="2"/>
</dbReference>
<dbReference type="SMART" id="SM01019">
    <property type="entry name" value="B3"/>
    <property type="match status" value="2"/>
</dbReference>
<dbReference type="SUPFAM" id="SSF101936">
    <property type="entry name" value="DNA-binding pseudobarrel domain"/>
    <property type="match status" value="2"/>
</dbReference>
<dbReference type="PROSITE" id="PS50863">
    <property type="entry name" value="B3"/>
    <property type="match status" value="2"/>
</dbReference>
<protein>
    <recommendedName>
        <fullName>B3 domain-containing protein Os11g0197600</fullName>
    </recommendedName>
</protein>
<feature type="chain" id="PRO_0000376990" description="B3 domain-containing protein Os11g0197600">
    <location>
        <begin position="1"/>
        <end position="406"/>
    </location>
</feature>
<feature type="DNA-binding region" description="TF-B3 1" evidence="1">
    <location>
        <begin position="30"/>
        <end position="123"/>
    </location>
</feature>
<feature type="DNA-binding region" description="TF-B3 2" evidence="1">
    <location>
        <begin position="298"/>
        <end position="393"/>
    </location>
</feature>
<feature type="region of interest" description="Disordered" evidence="2">
    <location>
        <begin position="1"/>
        <end position="20"/>
    </location>
</feature>
<feature type="region of interest" description="Disordered" evidence="2">
    <location>
        <begin position="199"/>
        <end position="245"/>
    </location>
</feature>
<feature type="compositionally biased region" description="Polar residues" evidence="2">
    <location>
        <begin position="214"/>
        <end position="225"/>
    </location>
</feature>